<reference key="1">
    <citation type="submission" date="2008-04" db="EMBL/GenBank/DDBJ databases">
        <title>Complete sequence of Yersinia pseudotuberculosis PB1/+.</title>
        <authorList>
            <person name="Copeland A."/>
            <person name="Lucas S."/>
            <person name="Lapidus A."/>
            <person name="Glavina del Rio T."/>
            <person name="Dalin E."/>
            <person name="Tice H."/>
            <person name="Bruce D."/>
            <person name="Goodwin L."/>
            <person name="Pitluck S."/>
            <person name="Munk A.C."/>
            <person name="Brettin T."/>
            <person name="Detter J.C."/>
            <person name="Han C."/>
            <person name="Tapia R."/>
            <person name="Schmutz J."/>
            <person name="Larimer F."/>
            <person name="Land M."/>
            <person name="Hauser L."/>
            <person name="Challacombe J.F."/>
            <person name="Green L."/>
            <person name="Lindler L.E."/>
            <person name="Nikolich M.P."/>
            <person name="Richardson P."/>
        </authorList>
    </citation>
    <scope>NUCLEOTIDE SEQUENCE [LARGE SCALE GENOMIC DNA]</scope>
    <source>
        <strain>PB1/+</strain>
    </source>
</reference>
<name>RL4_YERPB</name>
<sequence length="201" mass="22010">MELVMKDAPGALTVSETTFGRDFNEALVHQVVVAYAAGARQGTRAQKTRAEVTGSGKKPWRQKGTGRARAGSVKSPIWRSGGVTFAAKPQDHSQKVNKKMYRGALKSILSELVRQDRLIIVEKFSVEAPKTKLLAQKLKDMALEDVLIVTGELDENLFLAARNLYKVDVRDVAGIDPVSLIAFDKVVMTADAVKQVEEMLA</sequence>
<keyword id="KW-0687">Ribonucleoprotein</keyword>
<keyword id="KW-0689">Ribosomal protein</keyword>
<keyword id="KW-0694">RNA-binding</keyword>
<keyword id="KW-0699">rRNA-binding</keyword>
<gene>
    <name evidence="1" type="primary">rplD</name>
    <name type="ordered locus">YPTS_3889</name>
</gene>
<protein>
    <recommendedName>
        <fullName evidence="1">Large ribosomal subunit protein uL4</fullName>
    </recommendedName>
    <alternativeName>
        <fullName evidence="3">50S ribosomal protein L4</fullName>
    </alternativeName>
</protein>
<feature type="chain" id="PRO_1000142211" description="Large ribosomal subunit protein uL4">
    <location>
        <begin position="1"/>
        <end position="201"/>
    </location>
</feature>
<feature type="region of interest" description="Disordered" evidence="2">
    <location>
        <begin position="45"/>
        <end position="73"/>
    </location>
</feature>
<dbReference type="EMBL" id="CP001048">
    <property type="protein sequence ID" value="ACC90838.1"/>
    <property type="molecule type" value="Genomic_DNA"/>
</dbReference>
<dbReference type="RefSeq" id="WP_002218934.1">
    <property type="nucleotide sequence ID" value="NZ_CP009780.1"/>
</dbReference>
<dbReference type="SMR" id="B2K5M9"/>
<dbReference type="GeneID" id="96663195"/>
<dbReference type="KEGG" id="ypb:YPTS_3889"/>
<dbReference type="PATRIC" id="fig|502801.10.peg.3354"/>
<dbReference type="GO" id="GO:1990904">
    <property type="term" value="C:ribonucleoprotein complex"/>
    <property type="evidence" value="ECO:0007669"/>
    <property type="project" value="UniProtKB-KW"/>
</dbReference>
<dbReference type="GO" id="GO:0005840">
    <property type="term" value="C:ribosome"/>
    <property type="evidence" value="ECO:0007669"/>
    <property type="project" value="UniProtKB-KW"/>
</dbReference>
<dbReference type="GO" id="GO:0019843">
    <property type="term" value="F:rRNA binding"/>
    <property type="evidence" value="ECO:0007669"/>
    <property type="project" value="UniProtKB-UniRule"/>
</dbReference>
<dbReference type="GO" id="GO:0003735">
    <property type="term" value="F:structural constituent of ribosome"/>
    <property type="evidence" value="ECO:0007669"/>
    <property type="project" value="InterPro"/>
</dbReference>
<dbReference type="GO" id="GO:0006412">
    <property type="term" value="P:translation"/>
    <property type="evidence" value="ECO:0007669"/>
    <property type="project" value="UniProtKB-UniRule"/>
</dbReference>
<dbReference type="FunFam" id="3.40.1370.10:FF:000001">
    <property type="entry name" value="50S ribosomal protein L4"/>
    <property type="match status" value="1"/>
</dbReference>
<dbReference type="Gene3D" id="3.40.1370.10">
    <property type="match status" value="1"/>
</dbReference>
<dbReference type="HAMAP" id="MF_01328_B">
    <property type="entry name" value="Ribosomal_uL4_B"/>
    <property type="match status" value="1"/>
</dbReference>
<dbReference type="InterPro" id="IPR002136">
    <property type="entry name" value="Ribosomal_uL4"/>
</dbReference>
<dbReference type="InterPro" id="IPR013005">
    <property type="entry name" value="Ribosomal_uL4-like"/>
</dbReference>
<dbReference type="InterPro" id="IPR023574">
    <property type="entry name" value="Ribosomal_uL4_dom_sf"/>
</dbReference>
<dbReference type="NCBIfam" id="TIGR03953">
    <property type="entry name" value="rplD_bact"/>
    <property type="match status" value="1"/>
</dbReference>
<dbReference type="PANTHER" id="PTHR10746">
    <property type="entry name" value="50S RIBOSOMAL PROTEIN L4"/>
    <property type="match status" value="1"/>
</dbReference>
<dbReference type="PANTHER" id="PTHR10746:SF6">
    <property type="entry name" value="LARGE RIBOSOMAL SUBUNIT PROTEIN UL4M"/>
    <property type="match status" value="1"/>
</dbReference>
<dbReference type="Pfam" id="PF00573">
    <property type="entry name" value="Ribosomal_L4"/>
    <property type="match status" value="1"/>
</dbReference>
<dbReference type="SUPFAM" id="SSF52166">
    <property type="entry name" value="Ribosomal protein L4"/>
    <property type="match status" value="1"/>
</dbReference>
<accession>B2K5M9</accession>
<organism>
    <name type="scientific">Yersinia pseudotuberculosis serotype IB (strain PB1/+)</name>
    <dbReference type="NCBI Taxonomy" id="502801"/>
    <lineage>
        <taxon>Bacteria</taxon>
        <taxon>Pseudomonadati</taxon>
        <taxon>Pseudomonadota</taxon>
        <taxon>Gammaproteobacteria</taxon>
        <taxon>Enterobacterales</taxon>
        <taxon>Yersiniaceae</taxon>
        <taxon>Yersinia</taxon>
    </lineage>
</organism>
<comment type="function">
    <text evidence="1">One of the primary rRNA binding proteins, this protein initially binds near the 5'-end of the 23S rRNA. It is important during the early stages of 50S assembly. It makes multiple contacts with different domains of the 23S rRNA in the assembled 50S subunit and ribosome.</text>
</comment>
<comment type="function">
    <text evidence="1">Forms part of the polypeptide exit tunnel.</text>
</comment>
<comment type="subunit">
    <text evidence="1">Part of the 50S ribosomal subunit.</text>
</comment>
<comment type="similarity">
    <text evidence="1">Belongs to the universal ribosomal protein uL4 family.</text>
</comment>
<proteinExistence type="inferred from homology"/>
<evidence type="ECO:0000255" key="1">
    <source>
        <dbReference type="HAMAP-Rule" id="MF_01328"/>
    </source>
</evidence>
<evidence type="ECO:0000256" key="2">
    <source>
        <dbReference type="SAM" id="MobiDB-lite"/>
    </source>
</evidence>
<evidence type="ECO:0000305" key="3"/>